<evidence type="ECO:0000255" key="1">
    <source>
        <dbReference type="HAMAP-Rule" id="MF_01600"/>
    </source>
</evidence>
<evidence type="ECO:0000256" key="2">
    <source>
        <dbReference type="SAM" id="MobiDB-lite"/>
    </source>
</evidence>
<reference key="1">
    <citation type="journal article" date="2007" name="Microbiology">
        <title>Comparative analysis of the Corynebacterium glutamicum group and complete genome sequence of strain R.</title>
        <authorList>
            <person name="Yukawa H."/>
            <person name="Omumasaba C.A."/>
            <person name="Nonaka H."/>
            <person name="Kos P."/>
            <person name="Okai N."/>
            <person name="Suzuki N."/>
            <person name="Suda M."/>
            <person name="Tsuge Y."/>
            <person name="Watanabe J."/>
            <person name="Ikeda Y."/>
            <person name="Vertes A.A."/>
            <person name="Inui M."/>
        </authorList>
    </citation>
    <scope>NUCLEOTIDE SEQUENCE [LARGE SCALE GENOMIC DNA]</scope>
    <source>
        <strain>R</strain>
    </source>
</reference>
<proteinExistence type="inferred from homology"/>
<protein>
    <recommendedName>
        <fullName evidence="1">UPF0182 protein cgR_0895</fullName>
    </recommendedName>
</protein>
<keyword id="KW-1003">Cell membrane</keyword>
<keyword id="KW-0472">Membrane</keyword>
<keyword id="KW-0812">Transmembrane</keyword>
<keyword id="KW-1133">Transmembrane helix</keyword>
<organism>
    <name type="scientific">Corynebacterium glutamicum (strain R)</name>
    <dbReference type="NCBI Taxonomy" id="340322"/>
    <lineage>
        <taxon>Bacteria</taxon>
        <taxon>Bacillati</taxon>
        <taxon>Actinomycetota</taxon>
        <taxon>Actinomycetes</taxon>
        <taxon>Mycobacteriales</taxon>
        <taxon>Corynebacteriaceae</taxon>
        <taxon>Corynebacterium</taxon>
    </lineage>
</organism>
<sequence length="985" mass="109205">MSTGLTPPPQPIKRPPKAVTWIFAIIALIILIAPMSVGFYTDWLWFGEVDFRGVFSKVIVTRIVLFVIFALIAGFVTWLAGYFVTKLRPDEMSAFDTQSPVYQYRQMIENSLRRVMVLIPIFVALLAGLIGQRSWRTVQMWMNGQSFGVSDQQFGHDYGFYAFDLPMLRLVTDSLSMMLIVAFLIALVGHYLMGGIRAGNQMTGQKSFVSRGARTQLAVTAGLWMLVKVAGYWLDRYDLLTKENSTFTGASYTDINAQLPAKIILLVIALFVAIAFFSAIFLKDLRIPGLAVVLMLLSSVIIGAAWPLMLERFSVQPNRAEKEAEYISRNIESTRYAYGITDEDVTYEENWGAGETTNEEVAADSATISNIRLLDPQILSPTFTQQQQLRNFYGFPDQLAMDRFEVDGELRDFVVAARELDPNALQQNQQDWINRHTVYTHGNGFIAAQANQVDEVARDVGSTRGGYPVYTVSDLQSNARAAESEDAEQLGIKVDEPRVYYGPLIASATDGADYAIVGDTGDGPVEYDTDTSSYTYEGAGGVDIGNMVNRAMFALRYQEMNMLLSDRVGSESKILFERDPRSRVEKVAPWLTTDSKTYPTVIDGRIKWIVDGYTTLDSLPYSTRTSLTEATQDAVMPDGTPQPLITDKVGYIRNSVKAVVDAYDGTVELYEFDTEDPVLKAWRGVFPDTVKDESEISDELRAHLRYPEDLFKVQRDMLSKYHVDDSGTFFTNDAFWSVPGDPTAAEGRQELKQPPYYVVAADPETGESSFQLITPFRGLQREYLSAHMSASSDPNTYGEITVRVLPTDSVTQGPKQAQDAMMSSDQVAQDQTLWRGSNDLHNGNLLTLPVGGGEILYVEPIYSQRKDQASAFPKLLRVLVFYKGQVGYAPTIAEALSQVGIDPKAAQDIEEVDGTTTTPSTDETDTDTDQPATETPTAPVSEAEGIAAINDALSNLEAARDGSFEEYGRALDALDRAVDSYQSAQ</sequence>
<dbReference type="EMBL" id="AP009044">
    <property type="protein sequence ID" value="BAF53868.1"/>
    <property type="molecule type" value="Genomic_DNA"/>
</dbReference>
<dbReference type="RefSeq" id="WP_011896910.1">
    <property type="nucleotide sequence ID" value="NC_009342.1"/>
</dbReference>
<dbReference type="SMR" id="A4QCC1"/>
<dbReference type="KEGG" id="cgt:cgR_0895"/>
<dbReference type="HOGENOM" id="CLU_007733_1_0_11"/>
<dbReference type="PhylomeDB" id="A4QCC1"/>
<dbReference type="Proteomes" id="UP000006698">
    <property type="component" value="Chromosome"/>
</dbReference>
<dbReference type="GO" id="GO:0005576">
    <property type="term" value="C:extracellular region"/>
    <property type="evidence" value="ECO:0007669"/>
    <property type="project" value="TreeGrafter"/>
</dbReference>
<dbReference type="GO" id="GO:0005886">
    <property type="term" value="C:plasma membrane"/>
    <property type="evidence" value="ECO:0007669"/>
    <property type="project" value="UniProtKB-SubCell"/>
</dbReference>
<dbReference type="HAMAP" id="MF_01600">
    <property type="entry name" value="UPF0182"/>
    <property type="match status" value="1"/>
</dbReference>
<dbReference type="InterPro" id="IPR005372">
    <property type="entry name" value="UPF0182"/>
</dbReference>
<dbReference type="NCBIfam" id="NF000825">
    <property type="entry name" value="PRK00068.1"/>
    <property type="match status" value="1"/>
</dbReference>
<dbReference type="PANTHER" id="PTHR39344">
    <property type="entry name" value="UPF0182 PROTEIN SLL1060"/>
    <property type="match status" value="1"/>
</dbReference>
<dbReference type="PANTHER" id="PTHR39344:SF1">
    <property type="entry name" value="UPF0182 PROTEIN SLL1060"/>
    <property type="match status" value="1"/>
</dbReference>
<dbReference type="Pfam" id="PF03699">
    <property type="entry name" value="UPF0182"/>
    <property type="match status" value="1"/>
</dbReference>
<gene>
    <name type="ordered locus">cgR_0895</name>
</gene>
<accession>A4QCC1</accession>
<feature type="chain" id="PRO_1000088006" description="UPF0182 protein cgR_0895">
    <location>
        <begin position="1"/>
        <end position="985"/>
    </location>
</feature>
<feature type="transmembrane region" description="Helical" evidence="1">
    <location>
        <begin position="19"/>
        <end position="39"/>
    </location>
</feature>
<feature type="transmembrane region" description="Helical" evidence="1">
    <location>
        <begin position="63"/>
        <end position="83"/>
    </location>
</feature>
<feature type="transmembrane region" description="Helical" evidence="1">
    <location>
        <begin position="115"/>
        <end position="135"/>
    </location>
</feature>
<feature type="transmembrane region" description="Helical" evidence="1">
    <location>
        <begin position="176"/>
        <end position="196"/>
    </location>
</feature>
<feature type="transmembrane region" description="Helical" evidence="1">
    <location>
        <begin position="215"/>
        <end position="235"/>
    </location>
</feature>
<feature type="transmembrane region" description="Helical" evidence="1">
    <location>
        <begin position="262"/>
        <end position="282"/>
    </location>
</feature>
<feature type="transmembrane region" description="Helical" evidence="1">
    <location>
        <begin position="290"/>
        <end position="310"/>
    </location>
</feature>
<feature type="region of interest" description="Disordered" evidence="2">
    <location>
        <begin position="906"/>
        <end position="944"/>
    </location>
</feature>
<feature type="compositionally biased region" description="Low complexity" evidence="2">
    <location>
        <begin position="929"/>
        <end position="939"/>
    </location>
</feature>
<name>Y895_CORGB</name>
<comment type="subcellular location">
    <subcellularLocation>
        <location evidence="1">Cell membrane</location>
        <topology evidence="1">Multi-pass membrane protein</topology>
    </subcellularLocation>
</comment>
<comment type="similarity">
    <text evidence="1">Belongs to the UPF0182 family.</text>
</comment>